<evidence type="ECO:0000255" key="1">
    <source>
        <dbReference type="HAMAP-Rule" id="MF_00758"/>
    </source>
</evidence>
<reference key="1">
    <citation type="journal article" date="2009" name="J. Bacteriol.">
        <title>The genome of Burkholderia cenocepacia J2315, an epidemic pathogen of cystic fibrosis patients.</title>
        <authorList>
            <person name="Holden M.T."/>
            <person name="Seth-Smith H.M."/>
            <person name="Crossman L.C."/>
            <person name="Sebaihia M."/>
            <person name="Bentley S.D."/>
            <person name="Cerdeno-Tarraga A.M."/>
            <person name="Thomson N.R."/>
            <person name="Bason N."/>
            <person name="Quail M.A."/>
            <person name="Sharp S."/>
            <person name="Cherevach I."/>
            <person name="Churcher C."/>
            <person name="Goodhead I."/>
            <person name="Hauser H."/>
            <person name="Holroyd N."/>
            <person name="Mungall K."/>
            <person name="Scott P."/>
            <person name="Walker D."/>
            <person name="White B."/>
            <person name="Rose H."/>
            <person name="Iversen P."/>
            <person name="Mil-Homens D."/>
            <person name="Rocha E.P."/>
            <person name="Fialho A.M."/>
            <person name="Baldwin A."/>
            <person name="Dowson C."/>
            <person name="Barrell B.G."/>
            <person name="Govan J.R."/>
            <person name="Vandamme P."/>
            <person name="Hart C.A."/>
            <person name="Mahenthiralingam E."/>
            <person name="Parkhill J."/>
        </authorList>
    </citation>
    <scope>NUCLEOTIDE SEQUENCE [LARGE SCALE GENOMIC DNA]</scope>
    <source>
        <strain>ATCC BAA-245 / DSM 16553 / LMG 16656 / NCTC 13227 / J2315 / CF5610</strain>
    </source>
</reference>
<proteinExistence type="inferred from homology"/>
<gene>
    <name type="ordered locus">BceJ2315_30870</name>
    <name type="ORF">BCAL3142</name>
</gene>
<accession>B4ECT3</accession>
<organism>
    <name type="scientific">Burkholderia cenocepacia (strain ATCC BAA-245 / DSM 16553 / LMG 16656 / NCTC 13227 / J2315 / CF5610)</name>
    <name type="common">Burkholderia cepacia (strain J2315)</name>
    <dbReference type="NCBI Taxonomy" id="216591"/>
    <lineage>
        <taxon>Bacteria</taxon>
        <taxon>Pseudomonadati</taxon>
        <taxon>Pseudomonadota</taxon>
        <taxon>Betaproteobacteria</taxon>
        <taxon>Burkholderiales</taxon>
        <taxon>Burkholderiaceae</taxon>
        <taxon>Burkholderia</taxon>
        <taxon>Burkholderia cepacia complex</taxon>
    </lineage>
</organism>
<comment type="similarity">
    <text evidence="1">Belongs to the UPF0301 (AlgH) family.</text>
</comment>
<dbReference type="EMBL" id="AM747720">
    <property type="protein sequence ID" value="CAR53465.1"/>
    <property type="molecule type" value="Genomic_DNA"/>
</dbReference>
<dbReference type="RefSeq" id="WP_006491354.1">
    <property type="nucleotide sequence ID" value="NC_011000.1"/>
</dbReference>
<dbReference type="SMR" id="B4ECT3"/>
<dbReference type="KEGG" id="bcj:BCAL3142"/>
<dbReference type="eggNOG" id="COG1678">
    <property type="taxonomic scope" value="Bacteria"/>
</dbReference>
<dbReference type="HOGENOM" id="CLU_057596_1_0_4"/>
<dbReference type="BioCyc" id="BCEN216591:G1G1V-3485-MONOMER"/>
<dbReference type="Proteomes" id="UP000001035">
    <property type="component" value="Chromosome 1"/>
</dbReference>
<dbReference type="GO" id="GO:0005829">
    <property type="term" value="C:cytosol"/>
    <property type="evidence" value="ECO:0007669"/>
    <property type="project" value="TreeGrafter"/>
</dbReference>
<dbReference type="Gene3D" id="3.40.1740.10">
    <property type="entry name" value="VC0467-like"/>
    <property type="match status" value="1"/>
</dbReference>
<dbReference type="HAMAP" id="MF_00758">
    <property type="entry name" value="UPF0301"/>
    <property type="match status" value="1"/>
</dbReference>
<dbReference type="InterPro" id="IPR003774">
    <property type="entry name" value="AlgH-like"/>
</dbReference>
<dbReference type="NCBIfam" id="NF001266">
    <property type="entry name" value="PRK00228.1-1"/>
    <property type="match status" value="1"/>
</dbReference>
<dbReference type="NCBIfam" id="NF001267">
    <property type="entry name" value="PRK00228.1-2"/>
    <property type="match status" value="1"/>
</dbReference>
<dbReference type="PANTHER" id="PTHR30327">
    <property type="entry name" value="UNCHARACTERIZED PROTEIN YQGE"/>
    <property type="match status" value="1"/>
</dbReference>
<dbReference type="PANTHER" id="PTHR30327:SF1">
    <property type="entry name" value="UPF0301 PROTEIN YQGE"/>
    <property type="match status" value="1"/>
</dbReference>
<dbReference type="Pfam" id="PF02622">
    <property type="entry name" value="DUF179"/>
    <property type="match status" value="1"/>
</dbReference>
<dbReference type="SUPFAM" id="SSF143456">
    <property type="entry name" value="VC0467-like"/>
    <property type="match status" value="1"/>
</dbReference>
<sequence length="192" mass="20642">MSKPSDRINLTNQFLIAMPNMADPTFSGTVVYLCDHSERGALGLVINRPTDIDLESLFNRIDLKLDIEPLLHIPVYFGGPVQTERGFVLHEPVEGASYNSSMSVDGGLEMTTSKDVLEAVATGTGPKRFLLTLGHAGWGAGQLEEEISRNGWLTVAADPRIVFDTPAEERFEAALGLLGVSSSMLSGEAGHA</sequence>
<feature type="chain" id="PRO_1000198257" description="UPF0301 protein BceJ2315_30870">
    <location>
        <begin position="1"/>
        <end position="192"/>
    </location>
</feature>
<protein>
    <recommendedName>
        <fullName evidence="1">UPF0301 protein BceJ2315_30870</fullName>
    </recommendedName>
</protein>
<name>Y3087_BURCJ</name>